<sequence length="167" mass="17844">MVLTQHRVPDRPGDPDQDPGRGRRLGIDVGSVRIGVACSDPDAVLATPVETVRRDRSGKHLRRLAALVTELGAVEVVVGLPRTLADRTGTSALDAIDLADQLARRIAPTPVRLADERLTTVAAQRSLRAAGVRAKEQRAVIDQAAAVAILQSWLDQRRAATREAGDG</sequence>
<accession>Q741L2</accession>
<proteinExistence type="inferred from homology"/>
<comment type="function">
    <text evidence="1">Could be a nuclease involved in processing of the 5'-end of pre-16S rRNA.</text>
</comment>
<comment type="subcellular location">
    <subcellularLocation>
        <location evidence="1">Cytoplasm</location>
    </subcellularLocation>
</comment>
<comment type="similarity">
    <text evidence="1">Belongs to the YqgF nuclease family.</text>
</comment>
<evidence type="ECO:0000255" key="1">
    <source>
        <dbReference type="HAMAP-Rule" id="MF_00651"/>
    </source>
</evidence>
<evidence type="ECO:0000256" key="2">
    <source>
        <dbReference type="SAM" id="MobiDB-lite"/>
    </source>
</evidence>
<gene>
    <name type="ordered locus">MAP_1078</name>
</gene>
<keyword id="KW-0963">Cytoplasm</keyword>
<keyword id="KW-0378">Hydrolase</keyword>
<keyword id="KW-0540">Nuclease</keyword>
<keyword id="KW-1185">Reference proteome</keyword>
<keyword id="KW-0690">Ribosome biogenesis</keyword>
<protein>
    <recommendedName>
        <fullName evidence="1">Putative pre-16S rRNA nuclease</fullName>
        <ecNumber evidence="1">3.1.-.-</ecNumber>
    </recommendedName>
</protein>
<feature type="chain" id="PRO_0000172096" description="Putative pre-16S rRNA nuclease">
    <location>
        <begin position="1"/>
        <end position="167"/>
    </location>
</feature>
<feature type="region of interest" description="Disordered" evidence="2">
    <location>
        <begin position="1"/>
        <end position="24"/>
    </location>
</feature>
<feature type="compositionally biased region" description="Basic and acidic residues" evidence="2">
    <location>
        <begin position="7"/>
        <end position="21"/>
    </location>
</feature>
<reference key="1">
    <citation type="journal article" date="2005" name="Proc. Natl. Acad. Sci. U.S.A.">
        <title>The complete genome sequence of Mycobacterium avium subspecies paratuberculosis.</title>
        <authorList>
            <person name="Li L."/>
            <person name="Bannantine J.P."/>
            <person name="Zhang Q."/>
            <person name="Amonsin A."/>
            <person name="May B.J."/>
            <person name="Alt D."/>
            <person name="Banerji N."/>
            <person name="Kanjilal S."/>
            <person name="Kapur V."/>
        </authorList>
    </citation>
    <scope>NUCLEOTIDE SEQUENCE [LARGE SCALE GENOMIC DNA]</scope>
    <source>
        <strain>ATCC BAA-968 / K-10</strain>
    </source>
</reference>
<name>YQGF_MYCPA</name>
<organism>
    <name type="scientific">Mycolicibacterium paratuberculosis (strain ATCC BAA-968 / K-10)</name>
    <name type="common">Mycobacterium paratuberculosis</name>
    <dbReference type="NCBI Taxonomy" id="262316"/>
    <lineage>
        <taxon>Bacteria</taxon>
        <taxon>Bacillati</taxon>
        <taxon>Actinomycetota</taxon>
        <taxon>Actinomycetes</taxon>
        <taxon>Mycobacteriales</taxon>
        <taxon>Mycobacteriaceae</taxon>
        <taxon>Mycobacterium</taxon>
        <taxon>Mycobacterium avium complex (MAC)</taxon>
    </lineage>
</organism>
<dbReference type="EC" id="3.1.-.-" evidence="1"/>
<dbReference type="EMBL" id="AE016958">
    <property type="protein sequence ID" value="AAS03395.1"/>
    <property type="molecule type" value="Genomic_DNA"/>
</dbReference>
<dbReference type="SMR" id="Q741L2"/>
<dbReference type="STRING" id="262316.MAP_1078"/>
<dbReference type="KEGG" id="mpa:MAP_1078"/>
<dbReference type="eggNOG" id="COG0816">
    <property type="taxonomic scope" value="Bacteria"/>
</dbReference>
<dbReference type="HOGENOM" id="CLU_098240_0_1_11"/>
<dbReference type="Proteomes" id="UP000000580">
    <property type="component" value="Chromosome"/>
</dbReference>
<dbReference type="GO" id="GO:0005829">
    <property type="term" value="C:cytosol"/>
    <property type="evidence" value="ECO:0007669"/>
    <property type="project" value="TreeGrafter"/>
</dbReference>
<dbReference type="GO" id="GO:0004518">
    <property type="term" value="F:nuclease activity"/>
    <property type="evidence" value="ECO:0007669"/>
    <property type="project" value="UniProtKB-KW"/>
</dbReference>
<dbReference type="GO" id="GO:0000967">
    <property type="term" value="P:rRNA 5'-end processing"/>
    <property type="evidence" value="ECO:0007669"/>
    <property type="project" value="UniProtKB-UniRule"/>
</dbReference>
<dbReference type="CDD" id="cd16964">
    <property type="entry name" value="YqgF"/>
    <property type="match status" value="1"/>
</dbReference>
<dbReference type="FunFam" id="3.30.420.140:FF:000005">
    <property type="entry name" value="Putative pre-16S rRNA nuclease"/>
    <property type="match status" value="1"/>
</dbReference>
<dbReference type="Gene3D" id="3.30.420.140">
    <property type="entry name" value="YqgF/RNase H-like domain"/>
    <property type="match status" value="1"/>
</dbReference>
<dbReference type="HAMAP" id="MF_00651">
    <property type="entry name" value="Nuclease_YqgF"/>
    <property type="match status" value="1"/>
</dbReference>
<dbReference type="InterPro" id="IPR012337">
    <property type="entry name" value="RNaseH-like_sf"/>
</dbReference>
<dbReference type="InterPro" id="IPR005227">
    <property type="entry name" value="YqgF"/>
</dbReference>
<dbReference type="InterPro" id="IPR006641">
    <property type="entry name" value="YqgF/RNaseH-like_dom"/>
</dbReference>
<dbReference type="InterPro" id="IPR037027">
    <property type="entry name" value="YqgF/RNaseH-like_dom_sf"/>
</dbReference>
<dbReference type="NCBIfam" id="TIGR00250">
    <property type="entry name" value="RNAse_H_YqgF"/>
    <property type="match status" value="1"/>
</dbReference>
<dbReference type="PANTHER" id="PTHR33317">
    <property type="entry name" value="POLYNUCLEOTIDYL TRANSFERASE, RIBONUCLEASE H-LIKE SUPERFAMILY PROTEIN"/>
    <property type="match status" value="1"/>
</dbReference>
<dbReference type="PANTHER" id="PTHR33317:SF4">
    <property type="entry name" value="POLYNUCLEOTIDYL TRANSFERASE, RIBONUCLEASE H-LIKE SUPERFAMILY PROTEIN"/>
    <property type="match status" value="1"/>
</dbReference>
<dbReference type="Pfam" id="PF03652">
    <property type="entry name" value="RuvX"/>
    <property type="match status" value="1"/>
</dbReference>
<dbReference type="SMART" id="SM00732">
    <property type="entry name" value="YqgFc"/>
    <property type="match status" value="1"/>
</dbReference>
<dbReference type="SUPFAM" id="SSF53098">
    <property type="entry name" value="Ribonuclease H-like"/>
    <property type="match status" value="1"/>
</dbReference>